<comment type="function">
    <text evidence="1">Integral membrane protein involved in sensing of the presence of beta-lactam antibiotics and transduction of the information to the cytoplasm. Mechanistically, activation of the signal transducer involves acylation of a serine in the C-terminal sensor domain upon binding of the beta-lactam antibiotic. In turn, a conformational change occurs and the signal is transmitted from the cell surface to the cytoplasm. There, the zinc protease domain is activated and initiates autoproteolysis as well as cleavage of the transcriptional repressor BlaI leading to derepression of antibiotic resistance genes.</text>
</comment>
<comment type="subcellular location">
    <subcellularLocation>
        <location evidence="2">Cell membrane</location>
        <topology evidence="2">Multi-pass membrane protein</topology>
    </subcellularLocation>
</comment>
<comment type="PTM">
    <text evidence="1">Carboxylation occurs on two lysine residues. Carboxylation at 'Lys-405' activates the active site serine residue for acylation. On acylation, the lysine side chain experiences a spontaneous decarboxylation that entraps the sensor in its activated state.</text>
</comment>
<comment type="similarity">
    <text evidence="3">Belongs to the peptidase M56 family.</text>
</comment>
<keyword id="KW-0002">3D-structure</keyword>
<keyword id="KW-1003">Cell membrane</keyword>
<keyword id="KW-0472">Membrane</keyword>
<keyword id="KW-0812">Transmembrane</keyword>
<keyword id="KW-1133">Transmembrane helix</keyword>
<accession>P12287</accession>
<sequence length="601" mass="68417">MSSSFFIPFLVSQILLSLFFSIIILIKKLLRTQITVGTHYYISVISLLALIAPFIPFHFLKSHHFDWILNLGGAQSALSQTHSTDKTTEAIGQHVNWVQDFSLSIEQSSSKMIDSAFFAVWILGVAVMLLATLYSNLKIGKIKKNLQIVNNKELLSLFHTCKEEIRFHQKVILSRSPLIKSPITFGVIRPYIILPKDISMFSADEMKCVLLHELYHCKRKDMLINYFLCLLKIVYWFNPLVWYLSKEAKTEMEISCDFAVLKTLDKKLHLKYGEVILKFTSIKQRTSSLLAASEFSSSYKHIKRRIVTVVNFQTASPLLKAKSALVFTLVLGAILAGTPSVSILAMQKETRFLPGTNVEYEDYSTFFDKFSASGGFVLFNSNRKKYTIYNRKESTSRFAPASTYKVFSALLALESGIITKNDSHMTWDGTQYPYKEWNQDQDLFSAMSSSTTWYFQKLDRQIGEDHLRHYLKSIHYGNEDFSVPADYWLDGSLQISPLEQVNILKKFYDNEFDFKQSNIETVKDSIRLEESNGRVLSGKTGTSVINGELHAGWFIGYVETADNTFFFAVHIQGEKRAAGSSAAEIALSILDKKGIYPSVSR</sequence>
<gene>
    <name type="primary">blaR1</name>
    <name type="synonym">penR1</name>
</gene>
<feature type="chain" id="PRO_0000195469" description="Regulatory protein BlaR1">
    <location>
        <begin position="1"/>
        <end position="601"/>
    </location>
</feature>
<feature type="topological domain" description="Extracellular" evidence="2">
    <location>
        <begin position="1"/>
        <end position="8"/>
    </location>
</feature>
<feature type="transmembrane region" description="Helical" evidence="2">
    <location>
        <begin position="9"/>
        <end position="26"/>
    </location>
</feature>
<feature type="topological domain" description="Cytoplasmic" evidence="2">
    <location>
        <begin position="27"/>
        <end position="35"/>
    </location>
</feature>
<feature type="transmembrane region" description="Helical" evidence="2">
    <location>
        <begin position="36"/>
        <end position="52"/>
    </location>
</feature>
<feature type="topological domain" description="Extracellular" evidence="2">
    <location>
        <begin position="53"/>
        <end position="115"/>
    </location>
</feature>
<feature type="transmembrane region" description="Helical" evidence="2">
    <location>
        <begin position="116"/>
        <end position="133"/>
    </location>
</feature>
<feature type="topological domain" description="Cytoplasmic" evidence="2">
    <location>
        <begin position="134"/>
        <end position="322"/>
    </location>
</feature>
<feature type="transmembrane region" description="Helical" evidence="2">
    <location>
        <begin position="323"/>
        <end position="339"/>
    </location>
</feature>
<feature type="topological domain" description="Extracellular" evidence="2">
    <location>
        <begin position="340"/>
        <end position="601"/>
    </location>
</feature>
<feature type="region of interest" description="Beta-lactam antibiotic sensor domain" evidence="4">
    <location>
        <begin position="354"/>
        <end position="601"/>
    </location>
</feature>
<feature type="active site" description="Acyl-ester intermediate" evidence="1">
    <location>
        <position position="402"/>
    </location>
</feature>
<feature type="modified residue" description="N6-carboxylysine" evidence="1">
    <location>
        <position position="405"/>
    </location>
</feature>
<feature type="strand" evidence="6">
    <location>
        <begin position="357"/>
        <end position="360"/>
    </location>
</feature>
<feature type="helix" evidence="6">
    <location>
        <begin position="364"/>
        <end position="368"/>
    </location>
</feature>
<feature type="turn" evidence="6">
    <location>
        <begin position="369"/>
        <end position="371"/>
    </location>
</feature>
<feature type="strand" evidence="6">
    <location>
        <begin position="372"/>
        <end position="380"/>
    </location>
</feature>
<feature type="turn" evidence="6">
    <location>
        <begin position="381"/>
        <end position="384"/>
    </location>
</feature>
<feature type="strand" evidence="6">
    <location>
        <begin position="385"/>
        <end position="389"/>
    </location>
</feature>
<feature type="helix" evidence="6">
    <location>
        <begin position="391"/>
        <end position="395"/>
    </location>
</feature>
<feature type="helix" evidence="6">
    <location>
        <begin position="401"/>
        <end position="404"/>
    </location>
</feature>
<feature type="helix" evidence="6">
    <location>
        <begin position="405"/>
        <end position="414"/>
    </location>
</feature>
<feature type="turn" evidence="6">
    <location>
        <begin position="435"/>
        <end position="437"/>
    </location>
</feature>
<feature type="helix" evidence="6">
    <location>
        <begin position="443"/>
        <end position="449"/>
    </location>
</feature>
<feature type="helix" evidence="6">
    <location>
        <begin position="452"/>
        <end position="462"/>
    </location>
</feature>
<feature type="helix" evidence="6">
    <location>
        <begin position="464"/>
        <end position="473"/>
    </location>
</feature>
<feature type="turn" evidence="6">
    <location>
        <begin position="484"/>
        <end position="489"/>
    </location>
</feature>
<feature type="strand" evidence="6">
    <location>
        <begin position="490"/>
        <end position="493"/>
    </location>
</feature>
<feature type="helix" evidence="6">
    <location>
        <begin position="497"/>
        <end position="508"/>
    </location>
</feature>
<feature type="turn" evidence="6">
    <location>
        <begin position="509"/>
        <end position="512"/>
    </location>
</feature>
<feature type="helix" evidence="6">
    <location>
        <begin position="516"/>
        <end position="526"/>
    </location>
</feature>
<feature type="strand" evidence="6">
    <location>
        <begin position="527"/>
        <end position="531"/>
    </location>
</feature>
<feature type="strand" evidence="6">
    <location>
        <begin position="534"/>
        <end position="544"/>
    </location>
</feature>
<feature type="strand" evidence="6">
    <location>
        <begin position="546"/>
        <end position="548"/>
    </location>
</feature>
<feature type="strand" evidence="6">
    <location>
        <begin position="550"/>
        <end position="559"/>
    </location>
</feature>
<feature type="strand" evidence="6">
    <location>
        <begin position="564"/>
        <end position="574"/>
    </location>
</feature>
<feature type="helix" evidence="6">
    <location>
        <begin position="578"/>
        <end position="592"/>
    </location>
</feature>
<organism>
    <name type="scientific">Bacillus licheniformis</name>
    <dbReference type="NCBI Taxonomy" id="1402"/>
    <lineage>
        <taxon>Bacteria</taxon>
        <taxon>Bacillati</taxon>
        <taxon>Bacillota</taxon>
        <taxon>Bacilli</taxon>
        <taxon>Bacillales</taxon>
        <taxon>Bacillaceae</taxon>
        <taxon>Bacillus</taxon>
    </lineage>
</organism>
<name>BLAR_BACLI</name>
<proteinExistence type="evidence at protein level"/>
<protein>
    <recommendedName>
        <fullName>Regulatory protein BlaR1</fullName>
    </recommendedName>
</protein>
<dbReference type="EMBL" id="M17368">
    <property type="protein sequence ID" value="AAA22273.1"/>
    <property type="molecule type" value="Genomic_DNA"/>
</dbReference>
<dbReference type="EMBL" id="M21337">
    <property type="protein sequence ID" value="AAA22651.1"/>
    <property type="molecule type" value="Genomic_DNA"/>
</dbReference>
<dbReference type="PIR" id="I39790">
    <property type="entry name" value="I39790"/>
</dbReference>
<dbReference type="PDB" id="1NRF">
    <property type="method" value="X-ray"/>
    <property type="resolution" value="2.50 A"/>
    <property type="chains" value="A=346-601"/>
</dbReference>
<dbReference type="PDBsum" id="1NRF"/>
<dbReference type="SMR" id="P12287"/>
<dbReference type="ChEMBL" id="CHEMBL1744487"/>
<dbReference type="MEROPS" id="M56.003"/>
<dbReference type="EvolutionaryTrace" id="P12287"/>
<dbReference type="GO" id="GO:0005886">
    <property type="term" value="C:plasma membrane"/>
    <property type="evidence" value="ECO:0007669"/>
    <property type="project" value="UniProtKB-SubCell"/>
</dbReference>
<dbReference type="GO" id="GO:0008658">
    <property type="term" value="F:penicillin binding"/>
    <property type="evidence" value="ECO:0007669"/>
    <property type="project" value="InterPro"/>
</dbReference>
<dbReference type="CDD" id="cd07341">
    <property type="entry name" value="M56_BlaR1_MecR1_like"/>
    <property type="match status" value="1"/>
</dbReference>
<dbReference type="Gene3D" id="3.40.710.10">
    <property type="entry name" value="DD-peptidase/beta-lactamase superfamily"/>
    <property type="match status" value="1"/>
</dbReference>
<dbReference type="InterPro" id="IPR012338">
    <property type="entry name" value="Beta-lactam/transpept-like"/>
</dbReference>
<dbReference type="InterPro" id="IPR052173">
    <property type="entry name" value="Beta-lactam_resp_regulator"/>
</dbReference>
<dbReference type="InterPro" id="IPR001460">
    <property type="entry name" value="PCN-bd_Tpept"/>
</dbReference>
<dbReference type="InterPro" id="IPR008756">
    <property type="entry name" value="Peptidase_M56"/>
</dbReference>
<dbReference type="NCBIfam" id="NF000326">
    <property type="entry name" value="blaR1_generic"/>
    <property type="match status" value="1"/>
</dbReference>
<dbReference type="PANTHER" id="PTHR34978">
    <property type="entry name" value="POSSIBLE SENSOR-TRANSDUCER PROTEIN BLAR"/>
    <property type="match status" value="1"/>
</dbReference>
<dbReference type="PANTHER" id="PTHR34978:SF3">
    <property type="entry name" value="SLR0241 PROTEIN"/>
    <property type="match status" value="1"/>
</dbReference>
<dbReference type="Pfam" id="PF05569">
    <property type="entry name" value="Peptidase_M56"/>
    <property type="match status" value="1"/>
</dbReference>
<dbReference type="Pfam" id="PF00905">
    <property type="entry name" value="Transpeptidase"/>
    <property type="match status" value="1"/>
</dbReference>
<dbReference type="SUPFAM" id="SSF56601">
    <property type="entry name" value="beta-lactamase/transpeptidase-like"/>
    <property type="match status" value="1"/>
</dbReference>
<reference key="1">
    <citation type="journal article" date="1987" name="J. Bacteriol.">
        <title>A second regulatory gene, blaR1, encoding a potential penicillin-binding protein required for induction of beta-lactamase in Bacillus licheniformis.</title>
        <authorList>
            <person name="Kobayashi T."/>
            <person name="Zhu Y.F."/>
            <person name="Nicholls N.J."/>
            <person name="Lampen J.O."/>
        </authorList>
    </citation>
    <scope>NUCLEOTIDE SEQUENCE [GENOMIC DNA]</scope>
    <source>
        <strain>ATCC 25972 / DSM 8782 / NCIMB 11109 / IMET 10723 / 749/C</strain>
    </source>
</reference>
<reference key="2">
    <citation type="journal article" date="1988" name="J. Bacteriol.">
        <title>Regulation of the penicillinase genes of Bacillus licheniformis: interaction of the pen repressor with its operators.</title>
        <authorList>
            <person name="Wittman V."/>
            <person name="Wong H.C."/>
        </authorList>
    </citation>
    <scope>NUCLEOTIDE SEQUENCE [GENOMIC DNA] OF 1-74</scope>
    <source>
        <strain>ATCC 25972 / DSM 8782 / NCIMB 11109 / IMET 10723 / 749/C</strain>
    </source>
</reference>
<reference key="3">
    <citation type="journal article" date="1990" name="J. Bacteriol.">
        <title>Identification of BlaR, the signal transducer for beta-lactamase production in Bacillus licheniformis, as a penicillin-binding protein with strong homology to the OXA-2 beta-lactamase (class D) of Salmonella typhimurium.</title>
        <authorList>
            <person name="Zhu Y.F."/>
            <person name="Curran I.H.A."/>
            <person name="Joris B."/>
            <person name="Ghuysen J.-M."/>
            <person name="Lampen J.O."/>
        </authorList>
    </citation>
    <scope>DISCUSSION OF SEQUENCE</scope>
</reference>
<reference key="4">
    <citation type="journal article" date="1997" name="Mol. Microbiol.">
        <title>The penicillin sensory transducer, BlaR, involved in the inducibility of beta-lactamase synthesis in Bacillus licheniformis is embedded in the plasma membrane via a four-alpha-helix bundle.</title>
        <authorList>
            <person name="Hardt K."/>
            <person name="Joris B."/>
            <person name="Lepage S."/>
            <person name="Brasseur R."/>
            <person name="Lampen J.O."/>
            <person name="Frere J.M."/>
            <person name="Fink A.L."/>
            <person name="Ghuysen J.M."/>
        </authorList>
    </citation>
    <scope>TOPOLOGY</scope>
    <scope>SUBCELLULAR LOCATION</scope>
</reference>
<reference evidence="5" key="5">
    <citation type="journal article" date="2003" name="Biochemistry">
        <title>Crystal structure of the sensor domain of the BlaR penicillin receptor from Bacillus licheniformis.</title>
        <authorList>
            <person name="Kerff F."/>
            <person name="Charlier P."/>
            <person name="Colombo M.L."/>
            <person name="Sauvage E."/>
            <person name="Brans A."/>
            <person name="Frere J.M."/>
            <person name="Joris B."/>
            <person name="Fonze E."/>
        </authorList>
    </citation>
    <scope>X-RAY CRYSTALLOGRAPHY (2.50 ANGSTROMS) OF 346-601</scope>
    <scope>DOMAIN</scope>
</reference>
<evidence type="ECO:0000250" key="1">
    <source>
        <dbReference type="UniProtKB" id="P18357"/>
    </source>
</evidence>
<evidence type="ECO:0000269" key="2">
    <source>
    </source>
</evidence>
<evidence type="ECO:0000305" key="3"/>
<evidence type="ECO:0000305" key="4">
    <source>
    </source>
</evidence>
<evidence type="ECO:0007744" key="5">
    <source>
        <dbReference type="PDB" id="1NRF"/>
    </source>
</evidence>
<evidence type="ECO:0007829" key="6">
    <source>
        <dbReference type="PDB" id="1NRF"/>
    </source>
</evidence>